<comment type="function">
    <text evidence="1">Catalyzes the cleavage of L-kynurenine (L-Kyn) and L-3-hydroxykynurenine (L-3OHKyn) into anthranilic acid (AA) and 3-hydroxyanthranilic acid (3-OHAA), respectively.</text>
</comment>
<comment type="catalytic activity">
    <reaction evidence="1">
        <text>L-kynurenine + H2O = anthranilate + L-alanine + H(+)</text>
        <dbReference type="Rhea" id="RHEA:16813"/>
        <dbReference type="ChEBI" id="CHEBI:15377"/>
        <dbReference type="ChEBI" id="CHEBI:15378"/>
        <dbReference type="ChEBI" id="CHEBI:16567"/>
        <dbReference type="ChEBI" id="CHEBI:57959"/>
        <dbReference type="ChEBI" id="CHEBI:57972"/>
        <dbReference type="EC" id="3.7.1.3"/>
    </reaction>
</comment>
<comment type="catalytic activity">
    <reaction evidence="1">
        <text>3-hydroxy-L-kynurenine + H2O = 3-hydroxyanthranilate + L-alanine + H(+)</text>
        <dbReference type="Rhea" id="RHEA:25143"/>
        <dbReference type="ChEBI" id="CHEBI:15377"/>
        <dbReference type="ChEBI" id="CHEBI:15378"/>
        <dbReference type="ChEBI" id="CHEBI:36559"/>
        <dbReference type="ChEBI" id="CHEBI:57972"/>
        <dbReference type="ChEBI" id="CHEBI:58125"/>
        <dbReference type="EC" id="3.7.1.3"/>
    </reaction>
</comment>
<comment type="cofactor">
    <cofactor evidence="1">
        <name>pyridoxal 5'-phosphate</name>
        <dbReference type="ChEBI" id="CHEBI:597326"/>
    </cofactor>
</comment>
<comment type="pathway">
    <text evidence="1">Amino-acid degradation; L-kynurenine degradation; L-alanine and anthranilate from L-kynurenine: step 1/1.</text>
</comment>
<comment type="pathway">
    <text evidence="1">Cofactor biosynthesis; NAD(+) biosynthesis; quinolinate from L-kynurenine: step 2/3.</text>
</comment>
<comment type="subunit">
    <text evidence="1">Homodimer.</text>
</comment>
<comment type="subcellular location">
    <subcellularLocation>
        <location evidence="1">Cytoplasm</location>
    </subcellularLocation>
</comment>
<comment type="similarity">
    <text evidence="1">Belongs to the kynureninase family.</text>
</comment>
<dbReference type="EC" id="3.7.1.3" evidence="1"/>
<dbReference type="EMBL" id="CP000496">
    <property type="protein sequence ID" value="ABN65189.1"/>
    <property type="molecule type" value="Genomic_DNA"/>
</dbReference>
<dbReference type="RefSeq" id="XP_001383218.1">
    <property type="nucleotide sequence ID" value="XM_001383181.1"/>
</dbReference>
<dbReference type="SMR" id="A3LQD7"/>
<dbReference type="FunCoup" id="A3LQD7">
    <property type="interactions" value="224"/>
</dbReference>
<dbReference type="STRING" id="322104.A3LQD7"/>
<dbReference type="GeneID" id="4836702"/>
<dbReference type="KEGG" id="pic:PICST_55542"/>
<dbReference type="eggNOG" id="KOG3846">
    <property type="taxonomic scope" value="Eukaryota"/>
</dbReference>
<dbReference type="HOGENOM" id="CLU_003433_4_0_1"/>
<dbReference type="InParanoid" id="A3LQD7"/>
<dbReference type="OMA" id="LPGWNSH"/>
<dbReference type="OrthoDB" id="5978656at2759"/>
<dbReference type="UniPathway" id="UPA00253">
    <property type="reaction ID" value="UER00329"/>
</dbReference>
<dbReference type="UniPathway" id="UPA00334">
    <property type="reaction ID" value="UER00455"/>
</dbReference>
<dbReference type="Proteomes" id="UP000002258">
    <property type="component" value="Chromosome 2"/>
</dbReference>
<dbReference type="GO" id="GO:0005737">
    <property type="term" value="C:cytoplasm"/>
    <property type="evidence" value="ECO:0007669"/>
    <property type="project" value="UniProtKB-SubCell"/>
</dbReference>
<dbReference type="GO" id="GO:0030429">
    <property type="term" value="F:kynureninase activity"/>
    <property type="evidence" value="ECO:0007669"/>
    <property type="project" value="UniProtKB-UniRule"/>
</dbReference>
<dbReference type="GO" id="GO:0030170">
    <property type="term" value="F:pyridoxal phosphate binding"/>
    <property type="evidence" value="ECO:0007669"/>
    <property type="project" value="UniProtKB-UniRule"/>
</dbReference>
<dbReference type="GO" id="GO:0034354">
    <property type="term" value="P:'de novo' NAD biosynthetic process from L-tryptophan"/>
    <property type="evidence" value="ECO:0007669"/>
    <property type="project" value="UniProtKB-UniRule"/>
</dbReference>
<dbReference type="GO" id="GO:0043420">
    <property type="term" value="P:anthranilate metabolic process"/>
    <property type="evidence" value="ECO:0007669"/>
    <property type="project" value="UniProtKB-UniRule"/>
</dbReference>
<dbReference type="GO" id="GO:0097053">
    <property type="term" value="P:L-kynurenine catabolic process"/>
    <property type="evidence" value="ECO:0007669"/>
    <property type="project" value="UniProtKB-UniRule"/>
</dbReference>
<dbReference type="GO" id="GO:0019441">
    <property type="term" value="P:L-tryptophan catabolic process to kynurenine"/>
    <property type="evidence" value="ECO:0007669"/>
    <property type="project" value="TreeGrafter"/>
</dbReference>
<dbReference type="GO" id="GO:0019805">
    <property type="term" value="P:quinolinate biosynthetic process"/>
    <property type="evidence" value="ECO:0007669"/>
    <property type="project" value="UniProtKB-UniRule"/>
</dbReference>
<dbReference type="FunFam" id="3.40.640.10:FF:000031">
    <property type="entry name" value="Kynureninase"/>
    <property type="match status" value="1"/>
</dbReference>
<dbReference type="Gene3D" id="3.90.1150.10">
    <property type="entry name" value="Aspartate Aminotransferase, domain 1"/>
    <property type="match status" value="1"/>
</dbReference>
<dbReference type="Gene3D" id="3.40.640.10">
    <property type="entry name" value="Type I PLP-dependent aspartate aminotransferase-like (Major domain)"/>
    <property type="match status" value="1"/>
</dbReference>
<dbReference type="HAMAP" id="MF_01970">
    <property type="entry name" value="Kynureninase"/>
    <property type="match status" value="1"/>
</dbReference>
<dbReference type="InterPro" id="IPR010111">
    <property type="entry name" value="Kynureninase"/>
</dbReference>
<dbReference type="InterPro" id="IPR015424">
    <property type="entry name" value="PyrdxlP-dep_Trfase"/>
</dbReference>
<dbReference type="InterPro" id="IPR015421">
    <property type="entry name" value="PyrdxlP-dep_Trfase_major"/>
</dbReference>
<dbReference type="InterPro" id="IPR015422">
    <property type="entry name" value="PyrdxlP-dep_Trfase_small"/>
</dbReference>
<dbReference type="NCBIfam" id="TIGR01814">
    <property type="entry name" value="kynureninase"/>
    <property type="match status" value="1"/>
</dbReference>
<dbReference type="PANTHER" id="PTHR14084">
    <property type="entry name" value="KYNURENINASE"/>
    <property type="match status" value="1"/>
</dbReference>
<dbReference type="PANTHER" id="PTHR14084:SF0">
    <property type="entry name" value="KYNURENINASE"/>
    <property type="match status" value="1"/>
</dbReference>
<dbReference type="Pfam" id="PF22580">
    <property type="entry name" value="KYNU_C"/>
    <property type="match status" value="1"/>
</dbReference>
<dbReference type="PIRSF" id="PIRSF038800">
    <property type="entry name" value="KYNU"/>
    <property type="match status" value="1"/>
</dbReference>
<dbReference type="SUPFAM" id="SSF53383">
    <property type="entry name" value="PLP-dependent transferases"/>
    <property type="match status" value="1"/>
</dbReference>
<organism>
    <name type="scientific">Scheffersomyces stipitis (strain ATCC 58785 / CBS 6054 / NBRC 10063 / NRRL Y-11545)</name>
    <name type="common">Yeast</name>
    <name type="synonym">Pichia stipitis</name>
    <dbReference type="NCBI Taxonomy" id="322104"/>
    <lineage>
        <taxon>Eukaryota</taxon>
        <taxon>Fungi</taxon>
        <taxon>Dikarya</taxon>
        <taxon>Ascomycota</taxon>
        <taxon>Saccharomycotina</taxon>
        <taxon>Pichiomycetes</taxon>
        <taxon>Debaryomycetaceae</taxon>
        <taxon>Scheffersomyces</taxon>
    </lineage>
</organism>
<name>KYNU_PICST</name>
<feature type="chain" id="PRO_0000356984" description="Kynureninase">
    <location>
        <begin position="1"/>
        <end position="465"/>
    </location>
</feature>
<feature type="binding site" evidence="1">
    <location>
        <position position="116"/>
    </location>
    <ligand>
        <name>pyridoxal 5'-phosphate</name>
        <dbReference type="ChEBI" id="CHEBI:597326"/>
    </ligand>
</feature>
<feature type="binding site" evidence="1">
    <location>
        <position position="117"/>
    </location>
    <ligand>
        <name>pyridoxal 5'-phosphate</name>
        <dbReference type="ChEBI" id="CHEBI:597326"/>
    </ligand>
</feature>
<feature type="binding site" evidence="1">
    <location>
        <begin position="144"/>
        <end position="147"/>
    </location>
    <ligand>
        <name>pyridoxal 5'-phosphate</name>
        <dbReference type="ChEBI" id="CHEBI:597326"/>
    </ligand>
</feature>
<feature type="binding site" evidence="1">
    <location>
        <position position="231"/>
    </location>
    <ligand>
        <name>pyridoxal 5'-phosphate</name>
        <dbReference type="ChEBI" id="CHEBI:597326"/>
    </ligand>
</feature>
<feature type="binding site" evidence="1">
    <location>
        <position position="234"/>
    </location>
    <ligand>
        <name>pyridoxal 5'-phosphate</name>
        <dbReference type="ChEBI" id="CHEBI:597326"/>
    </ligand>
</feature>
<feature type="binding site" evidence="1">
    <location>
        <position position="256"/>
    </location>
    <ligand>
        <name>pyridoxal 5'-phosphate</name>
        <dbReference type="ChEBI" id="CHEBI:597326"/>
    </ligand>
</feature>
<feature type="binding site" evidence="1">
    <location>
        <position position="291"/>
    </location>
    <ligand>
        <name>pyridoxal 5'-phosphate</name>
        <dbReference type="ChEBI" id="CHEBI:597326"/>
    </ligand>
</feature>
<feature type="binding site" evidence="1">
    <location>
        <position position="319"/>
    </location>
    <ligand>
        <name>pyridoxal 5'-phosphate</name>
        <dbReference type="ChEBI" id="CHEBI:597326"/>
    </ligand>
</feature>
<feature type="modified residue" description="N6-(pyridoxal phosphate)lysine" evidence="1">
    <location>
        <position position="257"/>
    </location>
</feature>
<sequence length="465" mass="52840">MSLEKAQELDTKYPTYKDEFAVPTFKSLGIETSQFNENTDSIYLCGNSLGLMPKSTKQAINDELNAWIERGVESHFNHPGQSEGKTPWVDIDLPLVPLVAPIVGAKENEVAVMGSLTSNLNALLINFYKPKDKRTKILFEKQAFPSDYYAFLNLVKLHGYDESHLVQLKVLPGNTYLTTEQIKKAVDDNIDELAMVCFPGIQYYTGQFFKIEEITNYVKNKGKNEIVVGWDLAHAVGNVPLKLHDWNVDFAAWCSYKYLNSGPGGIAGIYVHEQYTKDNSKTSFSPRLAGWWGNNASDRFKMLEEFDPINSALSYRQSNPSVIDVVAVKSSLELFKKVGGVPKLRKKSIALTQFLQDLLVSSKYYFRSDNDTDRSKIGFTILTPLNQEERGAQLSVLFQPHYDDKQKNIMERVSGYLHNHAIICDERRPDVIRFAPLPLYNTFEETYYAAQRLFEALDKISSEEI</sequence>
<protein>
    <recommendedName>
        <fullName evidence="1">Kynureninase</fullName>
        <ecNumber evidence="1">3.7.1.3</ecNumber>
    </recommendedName>
    <alternativeName>
        <fullName evidence="1">Biosynthesis of nicotinic acid protein 5</fullName>
    </alternativeName>
    <alternativeName>
        <fullName evidence="1">L-kynurenine hydrolase</fullName>
    </alternativeName>
</protein>
<gene>
    <name evidence="1" type="primary">BNA5</name>
    <name type="ORF">PICST_55542</name>
</gene>
<accession>A3LQD7</accession>
<reference key="1">
    <citation type="journal article" date="2007" name="Nat. Biotechnol.">
        <title>Genome sequence of the lignocellulose-bioconverting and xylose-fermenting yeast Pichia stipitis.</title>
        <authorList>
            <person name="Jeffries T.W."/>
            <person name="Grigoriev I.V."/>
            <person name="Grimwood J."/>
            <person name="Laplaza J.M."/>
            <person name="Aerts A."/>
            <person name="Salamov A."/>
            <person name="Schmutz J."/>
            <person name="Lindquist E."/>
            <person name="Dehal P."/>
            <person name="Shapiro H."/>
            <person name="Jin Y.-S."/>
            <person name="Passoth V."/>
            <person name="Richardson P.M."/>
        </authorList>
    </citation>
    <scope>NUCLEOTIDE SEQUENCE [LARGE SCALE GENOMIC DNA]</scope>
    <source>
        <strain>ATCC 58785 / CBS 6054 / NBRC 10063 / NRRL Y-11545</strain>
    </source>
</reference>
<proteinExistence type="inferred from homology"/>
<evidence type="ECO:0000255" key="1">
    <source>
        <dbReference type="HAMAP-Rule" id="MF_03017"/>
    </source>
</evidence>
<keyword id="KW-0963">Cytoplasm</keyword>
<keyword id="KW-0378">Hydrolase</keyword>
<keyword id="KW-0662">Pyridine nucleotide biosynthesis</keyword>
<keyword id="KW-0663">Pyridoxal phosphate</keyword>
<keyword id="KW-1185">Reference proteome</keyword>